<reference key="1">
    <citation type="journal article" date="2011" name="J. Proteome Res.">
        <title>Identification of novel proteins from the venom of a cryptic snake Drysdalia coronoides by a combined transcriptomics and proteomics approach.</title>
        <authorList>
            <person name="Chatrath S.T."/>
            <person name="Chapeaurouge A."/>
            <person name="Lin Q."/>
            <person name="Lim T.K."/>
            <person name="Dunstan N."/>
            <person name="Mirtschin P."/>
            <person name="Kumar P.P."/>
            <person name="Kini R.M."/>
        </authorList>
    </citation>
    <scope>NUCLEOTIDE SEQUENCE [MRNA]</scope>
    <scope>IDENTIFICATION BY MASS SPECTROMETRY</scope>
    <source>
        <tissue>Venom</tissue>
        <tissue>Venom gland</tissue>
    </source>
</reference>
<protein>
    <recommendedName>
        <fullName>Kunitz-type serine protease inhibitor 28</fullName>
        <shortName>SPI-28</shortName>
    </recommendedName>
</protein>
<sequence>MSSGGLLLLLGLLTLWAELTPVSSKDRPHFCHLPADTGPCKARFQAFYYHPVHRKCLEFIYGGCEGNANNFKTIDECKRTCAA</sequence>
<organism>
    <name type="scientific">Drysdalia coronoides</name>
    <name type="common">White-lipped snake</name>
    <name type="synonym">Hoplocephalus coronoides</name>
    <dbReference type="NCBI Taxonomy" id="66186"/>
    <lineage>
        <taxon>Eukaryota</taxon>
        <taxon>Metazoa</taxon>
        <taxon>Chordata</taxon>
        <taxon>Craniata</taxon>
        <taxon>Vertebrata</taxon>
        <taxon>Euteleostomi</taxon>
        <taxon>Lepidosauria</taxon>
        <taxon>Squamata</taxon>
        <taxon>Bifurcata</taxon>
        <taxon>Unidentata</taxon>
        <taxon>Episquamata</taxon>
        <taxon>Toxicofera</taxon>
        <taxon>Serpentes</taxon>
        <taxon>Colubroidea</taxon>
        <taxon>Elapidae</taxon>
        <taxon>Notechinae</taxon>
        <taxon>Drysdalia</taxon>
    </lineage>
</organism>
<comment type="function">
    <text evidence="1">Serine protease inhibitor.</text>
</comment>
<comment type="subcellular location">
    <subcellularLocation>
        <location>Secreted</location>
    </subcellularLocation>
</comment>
<comment type="tissue specificity">
    <text>Expressed by the venom gland.</text>
</comment>
<comment type="similarity">
    <text evidence="4">Belongs to the venom Kunitz-type family.</text>
</comment>
<keyword id="KW-1015">Disulfide bond</keyword>
<keyword id="KW-0646">Protease inhibitor</keyword>
<keyword id="KW-0964">Secreted</keyword>
<keyword id="KW-0722">Serine protease inhibitor</keyword>
<keyword id="KW-0732">Signal</keyword>
<evidence type="ECO:0000250" key="1"/>
<evidence type="ECO:0000255" key="2"/>
<evidence type="ECO:0000255" key="3">
    <source>
        <dbReference type="PROSITE-ProRule" id="PRU00031"/>
    </source>
</evidence>
<evidence type="ECO:0000305" key="4"/>
<name>VKT28_DRYCN</name>
<feature type="signal peptide" evidence="2">
    <location>
        <begin position="1"/>
        <end position="24"/>
    </location>
</feature>
<feature type="chain" id="PRO_0000425515" description="Kunitz-type serine protease inhibitor 28">
    <location>
        <begin position="25"/>
        <end position="83"/>
    </location>
</feature>
<feature type="domain" description="BPTI/Kunitz inhibitor" evidence="3">
    <location>
        <begin position="31"/>
        <end position="81"/>
    </location>
</feature>
<feature type="site" description="Reactive bond for trypsin" evidence="1">
    <location>
        <begin position="41"/>
        <end position="42"/>
    </location>
</feature>
<feature type="disulfide bond" evidence="3">
    <location>
        <begin position="31"/>
        <end position="81"/>
    </location>
</feature>
<feature type="disulfide bond" evidence="3">
    <location>
        <begin position="40"/>
        <end position="64"/>
    </location>
</feature>
<feature type="disulfide bond" evidence="3">
    <location>
        <begin position="56"/>
        <end position="77"/>
    </location>
</feature>
<proteinExistence type="evidence at protein level"/>
<accession>F8J2F3</accession>
<dbReference type="EMBL" id="FJ752471">
    <property type="protein sequence ID" value="ACR78493.1"/>
    <property type="molecule type" value="mRNA"/>
</dbReference>
<dbReference type="SMR" id="F8J2F3"/>
<dbReference type="MEROPS" id="I02.052"/>
<dbReference type="GO" id="GO:0005615">
    <property type="term" value="C:extracellular space"/>
    <property type="evidence" value="ECO:0007669"/>
    <property type="project" value="TreeGrafter"/>
</dbReference>
<dbReference type="GO" id="GO:0004867">
    <property type="term" value="F:serine-type endopeptidase inhibitor activity"/>
    <property type="evidence" value="ECO:0007669"/>
    <property type="project" value="UniProtKB-KW"/>
</dbReference>
<dbReference type="CDD" id="cd22594">
    <property type="entry name" value="Kunitz_textilinin-like"/>
    <property type="match status" value="1"/>
</dbReference>
<dbReference type="FunFam" id="4.10.410.10:FF:000021">
    <property type="entry name" value="Serine protease inhibitor, putative"/>
    <property type="match status" value="1"/>
</dbReference>
<dbReference type="Gene3D" id="4.10.410.10">
    <property type="entry name" value="Pancreatic trypsin inhibitor Kunitz domain"/>
    <property type="match status" value="1"/>
</dbReference>
<dbReference type="InterPro" id="IPR002223">
    <property type="entry name" value="Kunitz_BPTI"/>
</dbReference>
<dbReference type="InterPro" id="IPR036880">
    <property type="entry name" value="Kunitz_BPTI_sf"/>
</dbReference>
<dbReference type="InterPro" id="IPR020901">
    <property type="entry name" value="Prtase_inh_Kunz-CS"/>
</dbReference>
<dbReference type="InterPro" id="IPR050098">
    <property type="entry name" value="TFPI/VKTCI-like"/>
</dbReference>
<dbReference type="PANTHER" id="PTHR10083:SF374">
    <property type="entry name" value="BPTI_KUNITZ INHIBITOR DOMAIN-CONTAINING PROTEIN"/>
    <property type="match status" value="1"/>
</dbReference>
<dbReference type="PANTHER" id="PTHR10083">
    <property type="entry name" value="KUNITZ-TYPE PROTEASE INHIBITOR-RELATED"/>
    <property type="match status" value="1"/>
</dbReference>
<dbReference type="Pfam" id="PF00014">
    <property type="entry name" value="Kunitz_BPTI"/>
    <property type="match status" value="1"/>
</dbReference>
<dbReference type="PRINTS" id="PR00759">
    <property type="entry name" value="BASICPTASE"/>
</dbReference>
<dbReference type="SMART" id="SM00131">
    <property type="entry name" value="KU"/>
    <property type="match status" value="1"/>
</dbReference>
<dbReference type="SUPFAM" id="SSF57362">
    <property type="entry name" value="BPTI-like"/>
    <property type="match status" value="1"/>
</dbReference>
<dbReference type="PROSITE" id="PS00280">
    <property type="entry name" value="BPTI_KUNITZ_1"/>
    <property type="match status" value="1"/>
</dbReference>
<dbReference type="PROSITE" id="PS50279">
    <property type="entry name" value="BPTI_KUNITZ_2"/>
    <property type="match status" value="1"/>
</dbReference>